<accession>P10622</accession>
<accession>D6VRM0</accession>
<evidence type="ECO:0000256" key="1">
    <source>
        <dbReference type="SAM" id="MobiDB-lite"/>
    </source>
</evidence>
<evidence type="ECO:0000269" key="2">
    <source>
    </source>
</evidence>
<evidence type="ECO:0000269" key="3">
    <source>
    </source>
</evidence>
<evidence type="ECO:0000269" key="4">
    <source>
    </source>
</evidence>
<evidence type="ECO:0000269" key="5">
    <source>
    </source>
</evidence>
<evidence type="ECO:0000269" key="6">
    <source>
    </source>
</evidence>
<evidence type="ECO:0000269" key="7">
    <source>
    </source>
</evidence>
<evidence type="ECO:0000303" key="8">
    <source>
    </source>
</evidence>
<evidence type="ECO:0000303" key="9">
    <source>
    </source>
</evidence>
<evidence type="ECO:0000305" key="10"/>
<evidence type="ECO:0000305" key="11">
    <source>
    </source>
</evidence>
<evidence type="ECO:0000305" key="12">
    <source>
    </source>
</evidence>
<evidence type="ECO:0000305" key="13">
    <source>
    </source>
</evidence>
<evidence type="ECO:0007744" key="14">
    <source>
    </source>
</evidence>
<dbReference type="EMBL" id="M19238">
    <property type="protein sequence ID" value="AAA34973.1"/>
    <property type="molecule type" value="Genomic_DNA"/>
</dbReference>
<dbReference type="EMBL" id="M26507">
    <property type="protein sequence ID" value="AAA34734.1"/>
    <property type="molecule type" value="Genomic_DNA"/>
</dbReference>
<dbReference type="EMBL" id="Z74178">
    <property type="protein sequence ID" value="CAA98698.1"/>
    <property type="molecule type" value="Genomic_DNA"/>
</dbReference>
<dbReference type="EMBL" id="BK006938">
    <property type="protein sequence ID" value="DAA11730.1"/>
    <property type="molecule type" value="Genomic_DNA"/>
</dbReference>
<dbReference type="PIR" id="C28104">
    <property type="entry name" value="R8BY2B"/>
</dbReference>
<dbReference type="RefSeq" id="NP_010153.1">
    <property type="nucleotide sequence ID" value="NM_001180189.1"/>
</dbReference>
<dbReference type="SMR" id="P10622"/>
<dbReference type="BioGRID" id="31933">
    <property type="interactions" value="312"/>
</dbReference>
<dbReference type="ComplexPortal" id="CPX-1601">
    <property type="entry name" value="60S cytosolic large ribosomal subunit"/>
</dbReference>
<dbReference type="DIP" id="DIP-2055N"/>
<dbReference type="FunCoup" id="P10622">
    <property type="interactions" value="946"/>
</dbReference>
<dbReference type="IntAct" id="P10622">
    <property type="interactions" value="98"/>
</dbReference>
<dbReference type="MINT" id="P10622"/>
<dbReference type="STRING" id="4932.YDL130W"/>
<dbReference type="iPTMnet" id="P10622"/>
<dbReference type="PaxDb" id="4932-YDL130W"/>
<dbReference type="PeptideAtlas" id="P10622"/>
<dbReference type="TopDownProteomics" id="P10622"/>
<dbReference type="EnsemblFungi" id="YDL130W_mRNA">
    <property type="protein sequence ID" value="YDL130W"/>
    <property type="gene ID" value="YDL130W"/>
</dbReference>
<dbReference type="GeneID" id="851427"/>
<dbReference type="KEGG" id="sce:YDL130W"/>
<dbReference type="AGR" id="SGD:S000002288"/>
<dbReference type="SGD" id="S000002288">
    <property type="gene designation" value="RPP1B"/>
</dbReference>
<dbReference type="VEuPathDB" id="FungiDB:YDL130W"/>
<dbReference type="eggNOG" id="KOG1762">
    <property type="taxonomic scope" value="Eukaryota"/>
</dbReference>
<dbReference type="HOGENOM" id="CLU_114656_1_0_1"/>
<dbReference type="InParanoid" id="P10622"/>
<dbReference type="OMA" id="NVWADVY"/>
<dbReference type="OrthoDB" id="2194681at2759"/>
<dbReference type="BioCyc" id="YEAST:G3O-29529-MONOMER"/>
<dbReference type="BioGRID-ORCS" id="851427">
    <property type="hits" value="0 hits in 10 CRISPR screens"/>
</dbReference>
<dbReference type="PRO" id="PR:P10622"/>
<dbReference type="Proteomes" id="UP000002311">
    <property type="component" value="Chromosome IV"/>
</dbReference>
<dbReference type="RNAct" id="P10622">
    <property type="molecule type" value="protein"/>
</dbReference>
<dbReference type="GO" id="GO:0022625">
    <property type="term" value="C:cytosolic large ribosomal subunit"/>
    <property type="evidence" value="ECO:0000314"/>
    <property type="project" value="SGD"/>
</dbReference>
<dbReference type="GO" id="GO:0000324">
    <property type="term" value="C:fungal-type vacuole"/>
    <property type="evidence" value="ECO:0007005"/>
    <property type="project" value="SGD"/>
</dbReference>
<dbReference type="GO" id="GO:0030295">
    <property type="term" value="F:protein kinase activator activity"/>
    <property type="evidence" value="ECO:0000250"/>
    <property type="project" value="SGD"/>
</dbReference>
<dbReference type="GO" id="GO:0043021">
    <property type="term" value="F:ribonucleoprotein complex binding"/>
    <property type="evidence" value="ECO:0000318"/>
    <property type="project" value="GO_Central"/>
</dbReference>
<dbReference type="GO" id="GO:0003735">
    <property type="term" value="F:structural constituent of ribosome"/>
    <property type="evidence" value="ECO:0000314"/>
    <property type="project" value="SGD"/>
</dbReference>
<dbReference type="GO" id="GO:0002181">
    <property type="term" value="P:cytoplasmic translation"/>
    <property type="evidence" value="ECO:0000315"/>
    <property type="project" value="SGD"/>
</dbReference>
<dbReference type="GO" id="GO:0006414">
    <property type="term" value="P:translational elongation"/>
    <property type="evidence" value="ECO:0007669"/>
    <property type="project" value="InterPro"/>
</dbReference>
<dbReference type="CDD" id="cd05831">
    <property type="entry name" value="Ribosomal_P1"/>
    <property type="match status" value="1"/>
</dbReference>
<dbReference type="FunFam" id="1.10.10.1410:FF:000002">
    <property type="entry name" value="60S acidic ribosomal protein P2"/>
    <property type="match status" value="1"/>
</dbReference>
<dbReference type="Gene3D" id="1.10.10.1410">
    <property type="match status" value="1"/>
</dbReference>
<dbReference type="HAMAP" id="MF_01478">
    <property type="entry name" value="Ribosomal_L12_arch"/>
    <property type="match status" value="1"/>
</dbReference>
<dbReference type="InterPro" id="IPR038716">
    <property type="entry name" value="P1/P2_N_sf"/>
</dbReference>
<dbReference type="InterPro" id="IPR027534">
    <property type="entry name" value="Ribosomal_P1/P2"/>
</dbReference>
<dbReference type="PANTHER" id="PTHR45696">
    <property type="entry name" value="60S ACIDIC RIBOSOMAL PROTEIN P1"/>
    <property type="match status" value="1"/>
</dbReference>
<dbReference type="PANTHER" id="PTHR45696:SF33">
    <property type="entry name" value="LARGE RIBOSOMAL SUBUNIT PROTEIN P1B"/>
    <property type="match status" value="1"/>
</dbReference>
<dbReference type="Pfam" id="PF00428">
    <property type="entry name" value="Ribosomal_60s"/>
    <property type="match status" value="1"/>
</dbReference>
<sequence>MSDSIISFAAFILADAGLEITSDNLLTITKAAGANVDNVWADVYAKALEGKDLKEILSGFHNAGPVAGAGAASGAAAAGGDAAAEEEKEEEAAEESDDDMGFGLFD</sequence>
<gene>
    <name evidence="9" type="primary">RPP1B</name>
    <name type="synonym">L12EIIB</name>
    <name type="synonym">RPL44P</name>
    <name type="synonym">RPLA3</name>
    <name type="ordered locus">YDL130W</name>
</gene>
<protein>
    <recommendedName>
        <fullName evidence="8">Large ribosomal subunit protein P1B</fullName>
        <shortName>P1B</shortName>
    </recommendedName>
    <alternativeName>
        <fullName evidence="9">60S acidic ribosomal protein P1-beta</fullName>
    </alternativeName>
    <alternativeName>
        <fullName>Ax</fullName>
    </alternativeName>
    <alternativeName>
        <fullName>L12eIIB</fullName>
    </alternativeName>
    <alternativeName>
        <fullName>L44'</fullName>
    </alternativeName>
    <alternativeName>
        <fullName>YP1beta</fullName>
    </alternativeName>
</protein>
<reference key="1">
    <citation type="journal article" date="1988" name="J. Biol. Chem.">
        <title>Independent genes coding for three acidic proteins of the large ribosomal subunit from Saccharomyces cerevisiae.</title>
        <authorList>
            <person name="Remacha M."/>
            <person name="Saenz-Robles M.T."/>
            <person name="Vilella M.D."/>
            <person name="Ballesta J.P.G."/>
        </authorList>
    </citation>
    <scope>NUCLEOTIDE SEQUENCE [GENOMIC DNA]</scope>
</reference>
<reference key="2">
    <citation type="journal article" date="1990" name="J. Bacteriol.">
        <title>A family of genes encode the multiple forms of the Saccharomyces cerevisiae ribosomal proteins equivalent to the Escherichia coli L12 protein and a single form of the L10-equivalent ribosomal protein.</title>
        <authorList>
            <person name="Newton C.H."/>
            <person name="Shimmin L.C."/>
            <person name="Yee J."/>
            <person name="Dennis P.P."/>
        </authorList>
    </citation>
    <scope>NUCLEOTIDE SEQUENCE [GENOMIC DNA]</scope>
    <source>
        <strain>SR26-12C</strain>
    </source>
</reference>
<reference key="3">
    <citation type="journal article" date="1997" name="Nature">
        <title>The nucleotide sequence of Saccharomyces cerevisiae chromosome IV.</title>
        <authorList>
            <person name="Jacq C."/>
            <person name="Alt-Moerbe J."/>
            <person name="Andre B."/>
            <person name="Arnold W."/>
            <person name="Bahr A."/>
            <person name="Ballesta J.P.G."/>
            <person name="Bargues M."/>
            <person name="Baron L."/>
            <person name="Becker A."/>
            <person name="Biteau N."/>
            <person name="Bloecker H."/>
            <person name="Blugeon C."/>
            <person name="Boskovic J."/>
            <person name="Brandt P."/>
            <person name="Brueckner M."/>
            <person name="Buitrago M.J."/>
            <person name="Coster F."/>
            <person name="Delaveau T."/>
            <person name="del Rey F."/>
            <person name="Dujon B."/>
            <person name="Eide L.G."/>
            <person name="Garcia-Cantalejo J.M."/>
            <person name="Goffeau A."/>
            <person name="Gomez-Peris A."/>
            <person name="Granotier C."/>
            <person name="Hanemann V."/>
            <person name="Hankeln T."/>
            <person name="Hoheisel J.D."/>
            <person name="Jaeger W."/>
            <person name="Jimenez A."/>
            <person name="Jonniaux J.-L."/>
            <person name="Kraemer C."/>
            <person name="Kuester H."/>
            <person name="Laamanen P."/>
            <person name="Legros Y."/>
            <person name="Louis E.J."/>
            <person name="Moeller-Rieker S."/>
            <person name="Monnet A."/>
            <person name="Moro M."/>
            <person name="Mueller-Auer S."/>
            <person name="Nussbaumer B."/>
            <person name="Paricio N."/>
            <person name="Paulin L."/>
            <person name="Perea J."/>
            <person name="Perez-Alonso M."/>
            <person name="Perez-Ortin J.E."/>
            <person name="Pohl T.M."/>
            <person name="Prydz H."/>
            <person name="Purnelle B."/>
            <person name="Rasmussen S.W."/>
            <person name="Remacha M.A."/>
            <person name="Revuelta J.L."/>
            <person name="Rieger M."/>
            <person name="Salom D."/>
            <person name="Saluz H.P."/>
            <person name="Saiz J.E."/>
            <person name="Saren A.-M."/>
            <person name="Schaefer M."/>
            <person name="Scharfe M."/>
            <person name="Schmidt E.R."/>
            <person name="Schneider C."/>
            <person name="Scholler P."/>
            <person name="Schwarz S."/>
            <person name="Soler-Mira A."/>
            <person name="Urrestarazu L.A."/>
            <person name="Verhasselt P."/>
            <person name="Vissers S."/>
            <person name="Voet M."/>
            <person name="Volckaert G."/>
            <person name="Wagner G."/>
            <person name="Wambutt R."/>
            <person name="Wedler E."/>
            <person name="Wedler H."/>
            <person name="Woelfl S."/>
            <person name="Harris D.E."/>
            <person name="Bowman S."/>
            <person name="Brown D."/>
            <person name="Churcher C.M."/>
            <person name="Connor R."/>
            <person name="Dedman K."/>
            <person name="Gentles S."/>
            <person name="Hamlin N."/>
            <person name="Hunt S."/>
            <person name="Jones L."/>
            <person name="McDonald S."/>
            <person name="Murphy L.D."/>
            <person name="Niblett D."/>
            <person name="Odell C."/>
            <person name="Oliver K."/>
            <person name="Rajandream M.A."/>
            <person name="Richards C."/>
            <person name="Shore L."/>
            <person name="Walsh S.V."/>
            <person name="Barrell B.G."/>
            <person name="Dietrich F.S."/>
            <person name="Mulligan J.T."/>
            <person name="Allen E."/>
            <person name="Araujo R."/>
            <person name="Aviles E."/>
            <person name="Berno A."/>
            <person name="Carpenter J."/>
            <person name="Chen E."/>
            <person name="Cherry J.M."/>
            <person name="Chung E."/>
            <person name="Duncan M."/>
            <person name="Hunicke-Smith S."/>
            <person name="Hyman R.W."/>
            <person name="Komp C."/>
            <person name="Lashkari D."/>
            <person name="Lew H."/>
            <person name="Lin D."/>
            <person name="Mosedale D."/>
            <person name="Nakahara K."/>
            <person name="Namath A."/>
            <person name="Oefner P."/>
            <person name="Oh C."/>
            <person name="Petel F.X."/>
            <person name="Roberts D."/>
            <person name="Schramm S."/>
            <person name="Schroeder M."/>
            <person name="Shogren T."/>
            <person name="Shroff N."/>
            <person name="Winant A."/>
            <person name="Yelton M.A."/>
            <person name="Botstein D."/>
            <person name="Davis R.W."/>
            <person name="Johnston M."/>
            <person name="Andrews S."/>
            <person name="Brinkman R."/>
            <person name="Cooper J."/>
            <person name="Ding H."/>
            <person name="Du Z."/>
            <person name="Favello A."/>
            <person name="Fulton L."/>
            <person name="Gattung S."/>
            <person name="Greco T."/>
            <person name="Hallsworth K."/>
            <person name="Hawkins J."/>
            <person name="Hillier L.W."/>
            <person name="Jier M."/>
            <person name="Johnson D."/>
            <person name="Johnston L."/>
            <person name="Kirsten J."/>
            <person name="Kucaba T."/>
            <person name="Langston Y."/>
            <person name="Latreille P."/>
            <person name="Le T."/>
            <person name="Mardis E."/>
            <person name="Menezes S."/>
            <person name="Miller N."/>
            <person name="Nhan M."/>
            <person name="Pauley A."/>
            <person name="Peluso D."/>
            <person name="Rifkin L."/>
            <person name="Riles L."/>
            <person name="Taich A."/>
            <person name="Trevaskis E."/>
            <person name="Vignati D."/>
            <person name="Wilcox L."/>
            <person name="Wohldman P."/>
            <person name="Vaudin M."/>
            <person name="Wilson R."/>
            <person name="Waterston R."/>
            <person name="Albermann K."/>
            <person name="Hani J."/>
            <person name="Heumann K."/>
            <person name="Kleine K."/>
            <person name="Mewes H.-W."/>
            <person name="Zollner A."/>
            <person name="Zaccaria P."/>
        </authorList>
    </citation>
    <scope>NUCLEOTIDE SEQUENCE [LARGE SCALE GENOMIC DNA]</scope>
    <source>
        <strain>ATCC 204508 / S288c</strain>
    </source>
</reference>
<reference key="4">
    <citation type="journal article" date="2014" name="G3 (Bethesda)">
        <title>The reference genome sequence of Saccharomyces cerevisiae: Then and now.</title>
        <authorList>
            <person name="Engel S.R."/>
            <person name="Dietrich F.S."/>
            <person name="Fisk D.G."/>
            <person name="Binkley G."/>
            <person name="Balakrishnan R."/>
            <person name="Costanzo M.C."/>
            <person name="Dwight S.S."/>
            <person name="Hitz B.C."/>
            <person name="Karra K."/>
            <person name="Nash R.S."/>
            <person name="Weng S."/>
            <person name="Wong E.D."/>
            <person name="Lloyd P."/>
            <person name="Skrzypek M.S."/>
            <person name="Miyasato S.R."/>
            <person name="Simison M."/>
            <person name="Cherry J.M."/>
        </authorList>
    </citation>
    <scope>GENOME REANNOTATION</scope>
    <source>
        <strain>ATCC 204508 / S288c</strain>
    </source>
</reference>
<reference key="5">
    <citation type="journal article" date="1993" name="Biochemistry">
        <title>The acidic phosphoproteins from Saccharomyces cerevisiae ribosomes. NH2-terminal acetylation is a conserved difference between P1 and P2 proteins.</title>
        <authorList>
            <person name="Santos C."/>
            <person name="Ortiz-Reyes B."/>
            <person name="Naranda T."/>
            <person name="Remacha M."/>
            <person name="Ballesta J.P.G."/>
        </authorList>
    </citation>
    <scope>PROTEIN SEQUENCE OF 9-16</scope>
    <scope>ACETYLATION AT SER-2</scope>
</reference>
<reference key="6">
    <citation type="journal article" date="1998" name="Yeast">
        <title>The list of cytoplasmic ribosomal proteins of Saccharomyces cerevisiae.</title>
        <authorList>
            <person name="Planta R.J."/>
            <person name="Mager W.H."/>
        </authorList>
    </citation>
    <scope>NOMENCLATURE</scope>
    <scope>SUBUNIT</scope>
</reference>
<reference key="7">
    <citation type="journal article" date="2001" name="J. Biol. Chem.">
        <title>Asymmetric interactions between the acidic P1 and P2 proteins in the Saccharomyces cerevisiae ribosomal stalk.</title>
        <authorList>
            <person name="Guarinos E."/>
            <person name="Remacha M."/>
            <person name="Ballesta J.P.G."/>
        </authorList>
    </citation>
    <scope>INTERACTION WITH RPP2A</scope>
</reference>
<reference key="8">
    <citation type="journal article" date="2003" name="Nature">
        <title>Global analysis of protein localization in budding yeast.</title>
        <authorList>
            <person name="Huh W.-K."/>
            <person name="Falvo J.V."/>
            <person name="Gerke L.C."/>
            <person name="Carroll A.S."/>
            <person name="Howson R.W."/>
            <person name="Weissman J.S."/>
            <person name="O'Shea E.K."/>
        </authorList>
    </citation>
    <scope>SUBCELLULAR LOCATION [LARGE SCALE ANALYSIS]</scope>
</reference>
<reference key="9">
    <citation type="journal article" date="2003" name="Nature">
        <title>Global analysis of protein expression in yeast.</title>
        <authorList>
            <person name="Ghaemmaghami S."/>
            <person name="Huh W.-K."/>
            <person name="Bower K."/>
            <person name="Howson R.W."/>
            <person name="Belle A."/>
            <person name="Dephoure N."/>
            <person name="O'Shea E.K."/>
            <person name="Weissman J.S."/>
        </authorList>
    </citation>
    <scope>LEVEL OF PROTEIN EXPRESSION [LARGE SCALE ANALYSIS]</scope>
</reference>
<reference key="10">
    <citation type="journal article" date="2006" name="Mol. Microbiol.">
        <title>Yeast ribosomal P0 protein has two separate binding sites for P1/P2 proteins.</title>
        <authorList>
            <person name="Krokowski D."/>
            <person name="Boguszewska A."/>
            <person name="Abramczyk D."/>
            <person name="Liljas A."/>
            <person name="Tchorzewski M."/>
            <person name="Grankowski N."/>
        </authorList>
    </citation>
    <scope>INTERACTION WITH RPP0 AND RPP2A</scope>
</reference>
<reference key="11">
    <citation type="journal article" date="2008" name="Mol. Cell. Proteomics">
        <title>A multidimensional chromatography technology for in-depth phosphoproteome analysis.</title>
        <authorList>
            <person name="Albuquerque C.P."/>
            <person name="Smolka M.B."/>
            <person name="Payne S.H."/>
            <person name="Bafna V."/>
            <person name="Eng J."/>
            <person name="Zhou H."/>
        </authorList>
    </citation>
    <scope>PHOSPHORYLATION [LARGE SCALE ANALYSIS] AT SER-96</scope>
    <scope>IDENTIFICATION BY MASS SPECTROMETRY [LARGE SCALE ANALYSIS]</scope>
</reference>
<reference key="12">
    <citation type="journal article" date="2011" name="Science">
        <title>The structure of the eukaryotic ribosome at 3.0 A resolution.</title>
        <authorList>
            <person name="Ben-Shem A."/>
            <person name="Garreau de Loubresse N."/>
            <person name="Melnikov S."/>
            <person name="Jenner L."/>
            <person name="Yusupova G."/>
            <person name="Yusupov M."/>
        </authorList>
    </citation>
    <scope>SUBUNIT</scope>
    <scope>SUBCELLULAR LOCATION</scope>
</reference>
<reference key="13">
    <citation type="journal article" date="2014" name="Curr. Opin. Struct. Biol.">
        <title>A new system for naming ribosomal proteins.</title>
        <authorList>
            <person name="Ban N."/>
            <person name="Beckmann R."/>
            <person name="Cate J.H.D."/>
            <person name="Dinman J.D."/>
            <person name="Dragon F."/>
            <person name="Ellis S.R."/>
            <person name="Lafontaine D.L.J."/>
            <person name="Lindahl L."/>
            <person name="Liljas A."/>
            <person name="Lipton J.M."/>
            <person name="McAlear M.A."/>
            <person name="Moore P.B."/>
            <person name="Noller H.F."/>
            <person name="Ortega J."/>
            <person name="Panse V.G."/>
            <person name="Ramakrishnan V."/>
            <person name="Spahn C.M.T."/>
            <person name="Steitz T.A."/>
            <person name="Tchorzewski M."/>
            <person name="Tollervey D."/>
            <person name="Warren A.J."/>
            <person name="Williamson J.R."/>
            <person name="Wilson D."/>
            <person name="Yonath A."/>
            <person name="Yusupov M."/>
        </authorList>
    </citation>
    <scope>NOMENCLATURE</scope>
</reference>
<keyword id="KW-0007">Acetylation</keyword>
<keyword id="KW-0963">Cytoplasm</keyword>
<keyword id="KW-0903">Direct protein sequencing</keyword>
<keyword id="KW-0597">Phosphoprotein</keyword>
<keyword id="KW-1185">Reference proteome</keyword>
<keyword id="KW-0687">Ribonucleoprotein</keyword>
<keyword id="KW-0689">Ribosomal protein</keyword>
<name>RLA3_YEAST</name>
<proteinExistence type="evidence at protein level"/>
<comment type="function">
    <text evidence="11">Component of the ribosome, a large ribonucleoprotein complex responsible for the synthesis of proteins in the cell. The small ribosomal subunit (SSU) binds messenger RNAs (mRNAs) and translates the encoded message by selecting cognate aminoacyl-transfer RNA (tRNA) molecules. The large subunit (LSU) contains the ribosomal catalytic site termed the peptidyl transferase center (PTC), which catalyzes the formation of peptide bonds, thereby polymerizing the amino acids delivered by tRNAs into a polypeptide chain. The nascent polypeptides leave the ribosome through a tunnel in the LSU and interact with protein factors that function in enzymatic processing, targeting, and the membrane insertion of nascent chains at the exit of the ribosomal tunnel.</text>
</comment>
<comment type="subunit">
    <text evidence="2 5 6 13">Component of the large ribosomal subunit (LSU). Mature yeast ribosomes consist of a small (40S) and a large (60S) subunit. The 40S small subunit contains 1 molecule of ribosomal RNA (18S rRNA) and 33 different proteins (encoded by 57 genes). The large 60S subunit contains 3 rRNA molecules (25S, 5.8S and 5S rRNA) and 46 different proteins (encoded by 81 genes) (PubMed:22096102, PubMed:9559554). The 5 acidic ribosomal P-proteins form the stalk structure of the 60S subunit. They are organized as a pentameric complex in which uL10/P0 interacts with 2 heterodimers, P1A-P2B and P1B-P2A (PubMed:11431471, PubMed:16573688).</text>
</comment>
<comment type="interaction">
    <interactant intactId="EBI-15460">
        <id>P10622</id>
    </interactant>
    <interactant intactId="EBI-15447">
        <id>P05317</id>
        <label>RPP0</label>
    </interactant>
    <organismsDiffer>false</organismsDiffer>
    <experiments>3</experiments>
</comment>
<comment type="interaction">
    <interactant intactId="EBI-15460">
        <id>P10622</id>
    </interactant>
    <interactant intactId="EBI-15456">
        <id>P05319</id>
        <label>RPP2A</label>
    </interactant>
    <organismsDiffer>false</organismsDiffer>
    <experiments>3</experiments>
</comment>
<comment type="subcellular location">
    <subcellularLocation>
        <location evidence="3 6">Cytoplasm</location>
    </subcellularLocation>
</comment>
<comment type="miscellaneous">
    <text evidence="12">The 4 small acidic ribosomal P-proteins from yeast can be classified into two couples of similar but not identical sequences. Each couple (P1A/P1B and P2A/P2B) is distinctly related to one of the two acidic ribosomal P-proteins P1/P2 present in multicellular organisms.</text>
</comment>
<comment type="miscellaneous">
    <text evidence="4">Present with 22400 molecules/cell in log phase SD medium.</text>
</comment>
<comment type="similarity">
    <text evidence="10">Belongs to the eukaryotic ribosomal protein P1/P2 family.</text>
</comment>
<organism>
    <name type="scientific">Saccharomyces cerevisiae (strain ATCC 204508 / S288c)</name>
    <name type="common">Baker's yeast</name>
    <dbReference type="NCBI Taxonomy" id="559292"/>
    <lineage>
        <taxon>Eukaryota</taxon>
        <taxon>Fungi</taxon>
        <taxon>Dikarya</taxon>
        <taxon>Ascomycota</taxon>
        <taxon>Saccharomycotina</taxon>
        <taxon>Saccharomycetes</taxon>
        <taxon>Saccharomycetales</taxon>
        <taxon>Saccharomycetaceae</taxon>
        <taxon>Saccharomyces</taxon>
    </lineage>
</organism>
<feature type="initiator methionine" description="Removed" evidence="7">
    <location>
        <position position="1"/>
    </location>
</feature>
<feature type="chain" id="PRO_0000157706" description="Large ribosomal subunit protein P1B">
    <location>
        <begin position="2"/>
        <end position="106"/>
    </location>
</feature>
<feature type="region of interest" description="Disordered" evidence="1">
    <location>
        <begin position="69"/>
        <end position="106"/>
    </location>
</feature>
<feature type="compositionally biased region" description="Low complexity" evidence="1">
    <location>
        <begin position="69"/>
        <end position="82"/>
    </location>
</feature>
<feature type="compositionally biased region" description="Acidic residues" evidence="1">
    <location>
        <begin position="83"/>
        <end position="100"/>
    </location>
</feature>
<feature type="modified residue" description="N-acetylserine" evidence="7">
    <location>
        <position position="2"/>
    </location>
</feature>
<feature type="modified residue" description="Phosphoserine" evidence="14">
    <location>
        <position position="96"/>
    </location>
</feature>